<proteinExistence type="inferred from homology"/>
<protein>
    <recommendedName>
        <fullName evidence="1">Isocitrate dehydrogenase kinase/phosphatase</fullName>
        <shortName evidence="1">IDH kinase/phosphatase</shortName>
        <shortName evidence="1">IDHK/P</shortName>
        <ecNumber evidence="1">2.7.11.5</ecNumber>
        <ecNumber evidence="1">3.1.3.-</ecNumber>
    </recommendedName>
</protein>
<organism>
    <name type="scientific">Anaeromyxobacter sp. (strain Fw109-5)</name>
    <dbReference type="NCBI Taxonomy" id="404589"/>
    <lineage>
        <taxon>Bacteria</taxon>
        <taxon>Pseudomonadati</taxon>
        <taxon>Myxococcota</taxon>
        <taxon>Myxococcia</taxon>
        <taxon>Myxococcales</taxon>
        <taxon>Cystobacterineae</taxon>
        <taxon>Anaeromyxobacteraceae</taxon>
        <taxon>Anaeromyxobacter</taxon>
    </lineage>
</organism>
<sequence length="575" mass="65586">MAEPNDVAAAGAAAIAASFEAYQEERARITRRARERFEKRDWAAGQADARERLDLRDRLVNACVGTVRAELGGAAHDHGLWRAMKELYEARVESRPDREIGQSFFNSVTRRVFVTVGVDPAIEFLAADGPAVREGPVPVYARYRREVSTEALLRTVLRACAFAAPYEDLERDARIAAIELDSHLRELDDGQPIEALELVKAVFYRGKGAYLVGRLRRGRYTTPLVLALVHGERGVVLDAILFTQEDVSIVFSFTRSYFHVEVERPRELVAFLSTLLPLKRVSELYIALGFNKHGKTELYREIARHIAETGEAFVPARGDKGLVMSVFTLPGLDVVFKVIKDEFKPPKQTTRREVMDKYRHVFRHDRAGRLVDAQEFEHLAFPADRFSPEVLRELSEECRGSIEIGRAEISVKHLYAERRVTPLNLFIREADEWTARQAVLDFGRALKDLAATNTFPGDLLLKNFGVTRHGRVIFYDYDELTRVTDCVFRDLPTPSGDDEETSGEPWFYVGQDDVFPEELLPFLGLAGRLREVFLQAHGDLLTARYWRAIQERIREGEIVDIYPYREEQRLVHGYE</sequence>
<reference key="1">
    <citation type="journal article" date="2015" name="Genome Announc.">
        <title>Complete genome sequence of Anaeromyxobacter sp. Fw109-5, an anaerobic, metal-reducing bacterium isolated from a contaminated subsurface environment.</title>
        <authorList>
            <person name="Hwang C."/>
            <person name="Copeland A."/>
            <person name="Lucas S."/>
            <person name="Lapidus A."/>
            <person name="Barry K."/>
            <person name="Glavina Del Rio T."/>
            <person name="Dalin E."/>
            <person name="Tice H."/>
            <person name="Pitluck S."/>
            <person name="Sims D."/>
            <person name="Brettin T."/>
            <person name="Bruce D.C."/>
            <person name="Detter J.C."/>
            <person name="Han C.S."/>
            <person name="Schmutz J."/>
            <person name="Larimer F.W."/>
            <person name="Land M.L."/>
            <person name="Hauser L.J."/>
            <person name="Kyrpides N."/>
            <person name="Lykidis A."/>
            <person name="Richardson P."/>
            <person name="Belieav A."/>
            <person name="Sanford R.A."/>
            <person name="Loeffler F.E."/>
            <person name="Fields M.W."/>
        </authorList>
    </citation>
    <scope>NUCLEOTIDE SEQUENCE [LARGE SCALE GENOMIC DNA]</scope>
    <source>
        <strain>Fw109-5</strain>
    </source>
</reference>
<name>ACEK_ANADF</name>
<comment type="function">
    <text evidence="1">Bifunctional enzyme which can phosphorylate or dephosphorylate isocitrate dehydrogenase (IDH) on a specific serine residue. This is a regulatory mechanism which enables bacteria to bypass the Krebs cycle via the glyoxylate shunt in response to the source of carbon. When bacteria are grown on glucose, IDH is fully active and unphosphorylated, but when grown on acetate or ethanol, the activity of IDH declines drastically concomitant with its phosphorylation.</text>
</comment>
<comment type="catalytic activity">
    <reaction evidence="1">
        <text>L-seryl-[isocitrate dehydrogenase] + ATP = O-phospho-L-seryl-[isocitrate dehydrogenase] + ADP + H(+)</text>
        <dbReference type="Rhea" id="RHEA:43540"/>
        <dbReference type="Rhea" id="RHEA-COMP:10605"/>
        <dbReference type="Rhea" id="RHEA-COMP:10606"/>
        <dbReference type="ChEBI" id="CHEBI:15378"/>
        <dbReference type="ChEBI" id="CHEBI:29999"/>
        <dbReference type="ChEBI" id="CHEBI:30616"/>
        <dbReference type="ChEBI" id="CHEBI:83421"/>
        <dbReference type="ChEBI" id="CHEBI:456216"/>
        <dbReference type="EC" id="2.7.11.5"/>
    </reaction>
</comment>
<comment type="subcellular location">
    <subcellularLocation>
        <location evidence="1">Cytoplasm</location>
    </subcellularLocation>
</comment>
<comment type="similarity">
    <text evidence="1">Belongs to the AceK family.</text>
</comment>
<feature type="chain" id="PRO_0000315261" description="Isocitrate dehydrogenase kinase/phosphatase">
    <location>
        <begin position="1"/>
        <end position="575"/>
    </location>
</feature>
<feature type="active site" evidence="1">
    <location>
        <position position="372"/>
    </location>
</feature>
<feature type="binding site" evidence="1">
    <location>
        <begin position="316"/>
        <end position="322"/>
    </location>
    <ligand>
        <name>ATP</name>
        <dbReference type="ChEBI" id="CHEBI:30616"/>
    </ligand>
</feature>
<feature type="binding site" evidence="1">
    <location>
        <position position="337"/>
    </location>
    <ligand>
        <name>ATP</name>
        <dbReference type="ChEBI" id="CHEBI:30616"/>
    </ligand>
</feature>
<evidence type="ECO:0000255" key="1">
    <source>
        <dbReference type="HAMAP-Rule" id="MF_00747"/>
    </source>
</evidence>
<accession>A7HB82</accession>
<gene>
    <name evidence="1" type="primary">aceK</name>
    <name type="ordered locus">Anae109_1775</name>
</gene>
<dbReference type="EC" id="2.7.11.5" evidence="1"/>
<dbReference type="EC" id="3.1.3.-" evidence="1"/>
<dbReference type="EMBL" id="CP000769">
    <property type="protein sequence ID" value="ABS25978.1"/>
    <property type="molecule type" value="Genomic_DNA"/>
</dbReference>
<dbReference type="RefSeq" id="WP_012096553.1">
    <property type="nucleotide sequence ID" value="NC_009675.1"/>
</dbReference>
<dbReference type="SMR" id="A7HB82"/>
<dbReference type="STRING" id="404589.Anae109_1775"/>
<dbReference type="KEGG" id="afw:Anae109_1775"/>
<dbReference type="eggNOG" id="COG4579">
    <property type="taxonomic scope" value="Bacteria"/>
</dbReference>
<dbReference type="HOGENOM" id="CLU_033804_1_1_7"/>
<dbReference type="OrthoDB" id="5287793at2"/>
<dbReference type="Proteomes" id="UP000006382">
    <property type="component" value="Chromosome"/>
</dbReference>
<dbReference type="GO" id="GO:0005737">
    <property type="term" value="C:cytoplasm"/>
    <property type="evidence" value="ECO:0007669"/>
    <property type="project" value="UniProtKB-SubCell"/>
</dbReference>
<dbReference type="GO" id="GO:0008772">
    <property type="term" value="F:[isocitrate dehydrogenase (NADP+)] kinase activity"/>
    <property type="evidence" value="ECO:0007669"/>
    <property type="project" value="UniProtKB-EC"/>
</dbReference>
<dbReference type="GO" id="GO:0016208">
    <property type="term" value="F:AMP binding"/>
    <property type="evidence" value="ECO:0007669"/>
    <property type="project" value="TreeGrafter"/>
</dbReference>
<dbReference type="GO" id="GO:0005524">
    <property type="term" value="F:ATP binding"/>
    <property type="evidence" value="ECO:0007669"/>
    <property type="project" value="UniProtKB-KW"/>
</dbReference>
<dbReference type="GO" id="GO:0004721">
    <property type="term" value="F:phosphoprotein phosphatase activity"/>
    <property type="evidence" value="ECO:0007669"/>
    <property type="project" value="UniProtKB-KW"/>
</dbReference>
<dbReference type="GO" id="GO:0004674">
    <property type="term" value="F:protein serine/threonine kinase activity"/>
    <property type="evidence" value="ECO:0007669"/>
    <property type="project" value="UniProtKB-KW"/>
</dbReference>
<dbReference type="GO" id="GO:0006006">
    <property type="term" value="P:glucose metabolic process"/>
    <property type="evidence" value="ECO:0007669"/>
    <property type="project" value="InterPro"/>
</dbReference>
<dbReference type="GO" id="GO:0006097">
    <property type="term" value="P:glyoxylate cycle"/>
    <property type="evidence" value="ECO:0007669"/>
    <property type="project" value="UniProtKB-KW"/>
</dbReference>
<dbReference type="GO" id="GO:0006099">
    <property type="term" value="P:tricarboxylic acid cycle"/>
    <property type="evidence" value="ECO:0007669"/>
    <property type="project" value="UniProtKB-KW"/>
</dbReference>
<dbReference type="HAMAP" id="MF_00747">
    <property type="entry name" value="AceK"/>
    <property type="match status" value="1"/>
</dbReference>
<dbReference type="InterPro" id="IPR046855">
    <property type="entry name" value="AceK_kinase"/>
</dbReference>
<dbReference type="InterPro" id="IPR046854">
    <property type="entry name" value="AceK_regulatory"/>
</dbReference>
<dbReference type="InterPro" id="IPR010452">
    <property type="entry name" value="Isocitrate_DH_AceK"/>
</dbReference>
<dbReference type="NCBIfam" id="NF002804">
    <property type="entry name" value="PRK02946.1"/>
    <property type="match status" value="1"/>
</dbReference>
<dbReference type="PANTHER" id="PTHR39559">
    <property type="match status" value="1"/>
</dbReference>
<dbReference type="PANTHER" id="PTHR39559:SF1">
    <property type="entry name" value="ISOCITRATE DEHYDROGENASE KINASE_PHOSPHATASE"/>
    <property type="match status" value="1"/>
</dbReference>
<dbReference type="Pfam" id="PF06315">
    <property type="entry name" value="AceK_kinase"/>
    <property type="match status" value="1"/>
</dbReference>
<dbReference type="Pfam" id="PF20423">
    <property type="entry name" value="AceK_regulatory"/>
    <property type="match status" value="1"/>
</dbReference>
<dbReference type="PIRSF" id="PIRSF000719">
    <property type="entry name" value="AceK"/>
    <property type="match status" value="1"/>
</dbReference>
<keyword id="KW-0067">ATP-binding</keyword>
<keyword id="KW-0963">Cytoplasm</keyword>
<keyword id="KW-0329">Glyoxylate bypass</keyword>
<keyword id="KW-0378">Hydrolase</keyword>
<keyword id="KW-0418">Kinase</keyword>
<keyword id="KW-0547">Nucleotide-binding</keyword>
<keyword id="KW-0904">Protein phosphatase</keyword>
<keyword id="KW-1185">Reference proteome</keyword>
<keyword id="KW-0723">Serine/threonine-protein kinase</keyword>
<keyword id="KW-0808">Transferase</keyword>
<keyword id="KW-0816">Tricarboxylic acid cycle</keyword>